<comment type="function">
    <text evidence="1">Required for maturation of 30S ribosomal subunits.</text>
</comment>
<comment type="subcellular location">
    <subcellularLocation>
        <location evidence="1">Cytoplasm</location>
    </subcellularLocation>
</comment>
<comment type="similarity">
    <text evidence="1">Belongs to the RimP family.</text>
</comment>
<feature type="chain" id="PRO_0000229214" description="Ribosome maturation factor RimP">
    <location>
        <begin position="1"/>
        <end position="153"/>
    </location>
</feature>
<reference key="1">
    <citation type="journal article" date="2014" name="Stand. Genomic Sci.">
        <title>Complete genome sequence of Anabaena variabilis ATCC 29413.</title>
        <authorList>
            <person name="Thiel T."/>
            <person name="Pratte B.S."/>
            <person name="Zhong J."/>
            <person name="Goodwin L."/>
            <person name="Copeland A."/>
            <person name="Lucas S."/>
            <person name="Han C."/>
            <person name="Pitluck S."/>
            <person name="Land M.L."/>
            <person name="Kyrpides N.C."/>
            <person name="Woyke T."/>
        </authorList>
    </citation>
    <scope>NUCLEOTIDE SEQUENCE [LARGE SCALE GENOMIC DNA]</scope>
    <source>
        <strain>ATCC 29413 / PCC 7937</strain>
    </source>
</reference>
<name>RIMP_TRIV2</name>
<proteinExistence type="inferred from homology"/>
<keyword id="KW-0963">Cytoplasm</keyword>
<keyword id="KW-0690">Ribosome biogenesis</keyword>
<dbReference type="EMBL" id="CP000117">
    <property type="protein sequence ID" value="ABA21493.1"/>
    <property type="molecule type" value="Genomic_DNA"/>
</dbReference>
<dbReference type="SMR" id="Q3MBZ3"/>
<dbReference type="STRING" id="240292.Ava_1871"/>
<dbReference type="KEGG" id="ava:Ava_1871"/>
<dbReference type="eggNOG" id="COG0779">
    <property type="taxonomic scope" value="Bacteria"/>
</dbReference>
<dbReference type="HOGENOM" id="CLU_070525_2_1_3"/>
<dbReference type="Proteomes" id="UP000002533">
    <property type="component" value="Chromosome"/>
</dbReference>
<dbReference type="GO" id="GO:0005829">
    <property type="term" value="C:cytosol"/>
    <property type="evidence" value="ECO:0007669"/>
    <property type="project" value="TreeGrafter"/>
</dbReference>
<dbReference type="GO" id="GO:0000028">
    <property type="term" value="P:ribosomal small subunit assembly"/>
    <property type="evidence" value="ECO:0007669"/>
    <property type="project" value="TreeGrafter"/>
</dbReference>
<dbReference type="GO" id="GO:0006412">
    <property type="term" value="P:translation"/>
    <property type="evidence" value="ECO:0007669"/>
    <property type="project" value="TreeGrafter"/>
</dbReference>
<dbReference type="CDD" id="cd01734">
    <property type="entry name" value="YlxS_C"/>
    <property type="match status" value="1"/>
</dbReference>
<dbReference type="FunFam" id="3.30.300.70:FF:000001">
    <property type="entry name" value="Ribosome maturation factor RimP"/>
    <property type="match status" value="1"/>
</dbReference>
<dbReference type="Gene3D" id="3.30.300.70">
    <property type="entry name" value="RimP-like superfamily, N-terminal"/>
    <property type="match status" value="1"/>
</dbReference>
<dbReference type="HAMAP" id="MF_01077">
    <property type="entry name" value="RimP"/>
    <property type="match status" value="1"/>
</dbReference>
<dbReference type="InterPro" id="IPR003728">
    <property type="entry name" value="Ribosome_maturation_RimP"/>
</dbReference>
<dbReference type="InterPro" id="IPR028998">
    <property type="entry name" value="RimP_C"/>
</dbReference>
<dbReference type="InterPro" id="IPR036847">
    <property type="entry name" value="RimP_C_sf"/>
</dbReference>
<dbReference type="InterPro" id="IPR028989">
    <property type="entry name" value="RimP_N"/>
</dbReference>
<dbReference type="InterPro" id="IPR035956">
    <property type="entry name" value="RimP_N_sf"/>
</dbReference>
<dbReference type="NCBIfam" id="NF000935">
    <property type="entry name" value="PRK00092.3-3"/>
    <property type="match status" value="1"/>
</dbReference>
<dbReference type="PANTHER" id="PTHR33867">
    <property type="entry name" value="RIBOSOME MATURATION FACTOR RIMP"/>
    <property type="match status" value="1"/>
</dbReference>
<dbReference type="PANTHER" id="PTHR33867:SF1">
    <property type="entry name" value="RIBOSOME MATURATION FACTOR RIMP"/>
    <property type="match status" value="1"/>
</dbReference>
<dbReference type="Pfam" id="PF17384">
    <property type="entry name" value="DUF150_C"/>
    <property type="match status" value="1"/>
</dbReference>
<dbReference type="Pfam" id="PF02576">
    <property type="entry name" value="RimP_N"/>
    <property type="match status" value="1"/>
</dbReference>
<dbReference type="SUPFAM" id="SSF74942">
    <property type="entry name" value="YhbC-like, C-terminal domain"/>
    <property type="match status" value="1"/>
</dbReference>
<dbReference type="SUPFAM" id="SSF75420">
    <property type="entry name" value="YhbC-like, N-terminal domain"/>
    <property type="match status" value="1"/>
</dbReference>
<organism>
    <name type="scientific">Trichormus variabilis (strain ATCC 29413 / PCC 7937)</name>
    <name type="common">Anabaena variabilis</name>
    <dbReference type="NCBI Taxonomy" id="240292"/>
    <lineage>
        <taxon>Bacteria</taxon>
        <taxon>Bacillati</taxon>
        <taxon>Cyanobacteriota</taxon>
        <taxon>Cyanophyceae</taxon>
        <taxon>Nostocales</taxon>
        <taxon>Nostocaceae</taxon>
        <taxon>Trichormus</taxon>
    </lineage>
</organism>
<accession>Q3MBZ3</accession>
<gene>
    <name evidence="1" type="primary">rimP</name>
    <name type="ordered locus">Ava_1871</name>
</gene>
<evidence type="ECO:0000255" key="1">
    <source>
        <dbReference type="HAMAP-Rule" id="MF_01077"/>
    </source>
</evidence>
<sequence length="153" mass="17137">MTHPLVPPITDLAIPVAEQLGLEVVGIVFHTNQRPPVLRVDIRNPQQDTGLDDCERMSRALEAALDATEIIPDAYVLEVSSPGISRQLVTDREFISFKGFPVIVSTSPPHEGQQEWIGQLIRRDETKVYINQKGRVIEIPRSLITRVLLHDGE</sequence>
<protein>
    <recommendedName>
        <fullName evidence="1">Ribosome maturation factor RimP</fullName>
    </recommendedName>
</protein>